<evidence type="ECO:0000255" key="1">
    <source>
        <dbReference type="HAMAP-Rule" id="MF_01363"/>
    </source>
</evidence>
<evidence type="ECO:0000305" key="2"/>
<sequence>MSYAVIVTGGKQYKVAEGEFLKIEKLEIATGESVTFDRVLLVANGEEVTIGAPVVAGAKVVAEVVSQGRHDKVRIIKFRRRKHHMKRMGHRQWFTEIKITGIQA</sequence>
<proteinExistence type="inferred from homology"/>
<feature type="chain" id="PRO_1000143837" description="Large ribosomal subunit protein bL21">
    <location>
        <begin position="1"/>
        <end position="104"/>
    </location>
</feature>
<reference key="1">
    <citation type="submission" date="2008-02" db="EMBL/GenBank/DDBJ databases">
        <title>Complete sequence of Pseudomonas putida W619.</title>
        <authorList>
            <person name="Copeland A."/>
            <person name="Lucas S."/>
            <person name="Lapidus A."/>
            <person name="Barry K."/>
            <person name="Detter J.C."/>
            <person name="Glavina del Rio T."/>
            <person name="Dalin E."/>
            <person name="Tice H."/>
            <person name="Pitluck S."/>
            <person name="Chain P."/>
            <person name="Malfatti S."/>
            <person name="Shin M."/>
            <person name="Vergez L."/>
            <person name="Schmutz J."/>
            <person name="Larimer F."/>
            <person name="Land M."/>
            <person name="Hauser L."/>
            <person name="Kyrpides N."/>
            <person name="Kim E."/>
            <person name="Taghavi S."/>
            <person name="Vangronsveld D."/>
            <person name="van der Lelie D."/>
            <person name="Richardson P."/>
        </authorList>
    </citation>
    <scope>NUCLEOTIDE SEQUENCE [LARGE SCALE GENOMIC DNA]</scope>
    <source>
        <strain>W619</strain>
    </source>
</reference>
<comment type="function">
    <text evidence="1">This protein binds to 23S rRNA in the presence of protein L20.</text>
</comment>
<comment type="subunit">
    <text evidence="1">Part of the 50S ribosomal subunit. Contacts protein L20.</text>
</comment>
<comment type="similarity">
    <text evidence="1">Belongs to the bacterial ribosomal protein bL21 family.</text>
</comment>
<keyword id="KW-0687">Ribonucleoprotein</keyword>
<keyword id="KW-0689">Ribosomal protein</keyword>
<keyword id="KW-0694">RNA-binding</keyword>
<keyword id="KW-0699">rRNA-binding</keyword>
<accession>B1JF59</accession>
<gene>
    <name evidence="1" type="primary">rplU</name>
    <name type="ordered locus">PputW619_4497</name>
</gene>
<dbReference type="EMBL" id="CP000949">
    <property type="protein sequence ID" value="ACA74977.1"/>
    <property type="molecule type" value="Genomic_DNA"/>
</dbReference>
<dbReference type="SMR" id="B1JF59"/>
<dbReference type="STRING" id="390235.PputW619_4497"/>
<dbReference type="KEGG" id="ppw:PputW619_4497"/>
<dbReference type="eggNOG" id="COG0261">
    <property type="taxonomic scope" value="Bacteria"/>
</dbReference>
<dbReference type="HOGENOM" id="CLU_061463_3_2_6"/>
<dbReference type="OrthoDB" id="9813334at2"/>
<dbReference type="GO" id="GO:0005737">
    <property type="term" value="C:cytoplasm"/>
    <property type="evidence" value="ECO:0007669"/>
    <property type="project" value="UniProtKB-ARBA"/>
</dbReference>
<dbReference type="GO" id="GO:1990904">
    <property type="term" value="C:ribonucleoprotein complex"/>
    <property type="evidence" value="ECO:0007669"/>
    <property type="project" value="UniProtKB-KW"/>
</dbReference>
<dbReference type="GO" id="GO:0005840">
    <property type="term" value="C:ribosome"/>
    <property type="evidence" value="ECO:0007669"/>
    <property type="project" value="UniProtKB-KW"/>
</dbReference>
<dbReference type="GO" id="GO:0019843">
    <property type="term" value="F:rRNA binding"/>
    <property type="evidence" value="ECO:0007669"/>
    <property type="project" value="UniProtKB-UniRule"/>
</dbReference>
<dbReference type="GO" id="GO:0003735">
    <property type="term" value="F:structural constituent of ribosome"/>
    <property type="evidence" value="ECO:0007669"/>
    <property type="project" value="InterPro"/>
</dbReference>
<dbReference type="GO" id="GO:0006412">
    <property type="term" value="P:translation"/>
    <property type="evidence" value="ECO:0007669"/>
    <property type="project" value="UniProtKB-UniRule"/>
</dbReference>
<dbReference type="HAMAP" id="MF_01363">
    <property type="entry name" value="Ribosomal_bL21"/>
    <property type="match status" value="1"/>
</dbReference>
<dbReference type="InterPro" id="IPR028909">
    <property type="entry name" value="bL21-like"/>
</dbReference>
<dbReference type="InterPro" id="IPR036164">
    <property type="entry name" value="bL21-like_sf"/>
</dbReference>
<dbReference type="InterPro" id="IPR001787">
    <property type="entry name" value="Ribosomal_bL21"/>
</dbReference>
<dbReference type="InterPro" id="IPR018258">
    <property type="entry name" value="Ribosomal_bL21_CS"/>
</dbReference>
<dbReference type="NCBIfam" id="TIGR00061">
    <property type="entry name" value="L21"/>
    <property type="match status" value="1"/>
</dbReference>
<dbReference type="PANTHER" id="PTHR21349">
    <property type="entry name" value="50S RIBOSOMAL PROTEIN L21"/>
    <property type="match status" value="1"/>
</dbReference>
<dbReference type="PANTHER" id="PTHR21349:SF0">
    <property type="entry name" value="LARGE RIBOSOMAL SUBUNIT PROTEIN BL21M"/>
    <property type="match status" value="1"/>
</dbReference>
<dbReference type="Pfam" id="PF00829">
    <property type="entry name" value="Ribosomal_L21p"/>
    <property type="match status" value="1"/>
</dbReference>
<dbReference type="SUPFAM" id="SSF141091">
    <property type="entry name" value="L21p-like"/>
    <property type="match status" value="1"/>
</dbReference>
<dbReference type="PROSITE" id="PS01169">
    <property type="entry name" value="RIBOSOMAL_L21"/>
    <property type="match status" value="1"/>
</dbReference>
<protein>
    <recommendedName>
        <fullName evidence="1">Large ribosomal subunit protein bL21</fullName>
    </recommendedName>
    <alternativeName>
        <fullName evidence="2">50S ribosomal protein L21</fullName>
    </alternativeName>
</protein>
<name>RL21_PSEPW</name>
<organism>
    <name type="scientific">Pseudomonas putida (strain W619)</name>
    <dbReference type="NCBI Taxonomy" id="390235"/>
    <lineage>
        <taxon>Bacteria</taxon>
        <taxon>Pseudomonadati</taxon>
        <taxon>Pseudomonadota</taxon>
        <taxon>Gammaproteobacteria</taxon>
        <taxon>Pseudomonadales</taxon>
        <taxon>Pseudomonadaceae</taxon>
        <taxon>Pseudomonas</taxon>
    </lineage>
</organism>